<gene>
    <name evidence="1" type="primary">ogg</name>
    <name type="ordered locus">TRQ2_1000</name>
</gene>
<accession>B1LAK2</accession>
<evidence type="ECO:0000255" key="1">
    <source>
        <dbReference type="HAMAP-Rule" id="MF_00241"/>
    </source>
</evidence>
<reference key="1">
    <citation type="journal article" date="2011" name="J. Bacteriol.">
        <title>Genome sequence of Thermotoga sp. strain RQ2, a hyperthermophilic bacterium isolated from a geothermally heated region of the seafloor near Ribeira Quente, the Azores.</title>
        <authorList>
            <person name="Swithers K.S."/>
            <person name="DiPippo J.L."/>
            <person name="Bruce D.C."/>
            <person name="Detter C."/>
            <person name="Tapia R."/>
            <person name="Han S."/>
            <person name="Saunders E."/>
            <person name="Goodwin L.A."/>
            <person name="Han J."/>
            <person name="Woyke T."/>
            <person name="Pitluck S."/>
            <person name="Pennacchio L."/>
            <person name="Nolan M."/>
            <person name="Mikhailova N."/>
            <person name="Lykidis A."/>
            <person name="Land M.L."/>
            <person name="Brettin T."/>
            <person name="Stetter K.O."/>
            <person name="Nelson K.E."/>
            <person name="Gogarten J.P."/>
            <person name="Noll K.M."/>
        </authorList>
    </citation>
    <scope>NUCLEOTIDE SEQUENCE [LARGE SCALE GENOMIC DNA]</scope>
    <source>
        <strain>RQ2</strain>
    </source>
</reference>
<sequence length="207" mass="24182">MEELLKELERIREEAKPLVEQRFEEFKRLGEEGTEEDLFCELSFCVLTANWSAEGGIRAQKEIGKGFVHLPLEELAEKLREVGHRYPQKRAEFIVENRKLLGKLKNLVKGDPFQSREFLVRNAKGIGWKEASHFLRNTGVEDLAILDKHVLKLMKRHGLIQEIPKGWSKKRYLYVEEILRKVAEAFGESPGKFDLYLWYLVKGKVDK</sequence>
<organism>
    <name type="scientific">Thermotoga sp. (strain RQ2)</name>
    <dbReference type="NCBI Taxonomy" id="126740"/>
    <lineage>
        <taxon>Bacteria</taxon>
        <taxon>Thermotogati</taxon>
        <taxon>Thermotogota</taxon>
        <taxon>Thermotogae</taxon>
        <taxon>Thermotogales</taxon>
        <taxon>Thermotogaceae</taxon>
        <taxon>Thermotoga</taxon>
    </lineage>
</organism>
<name>OGG1_THESQ</name>
<keyword id="KW-0227">DNA damage</keyword>
<keyword id="KW-0234">DNA repair</keyword>
<keyword id="KW-0326">Glycosidase</keyword>
<keyword id="KW-0378">Hydrolase</keyword>
<keyword id="KW-0456">Lyase</keyword>
<keyword id="KW-0511">Multifunctional enzyme</keyword>
<comment type="function">
    <text evidence="1">Catalyzes the excision of an oxidatively damaged form of guanine (7,8-dihydro-8-oxoguanine = 8-oxoG) from DNA. Also cleaves the DNA backbone at apurinic/apyrimidinic sites (AP sites).</text>
</comment>
<comment type="catalytic activity">
    <reaction evidence="1">
        <text>2'-deoxyribonucleotide-(2'-deoxyribose 5'-phosphate)-2'-deoxyribonucleotide-DNA = a 3'-end 2'-deoxyribonucleotide-(2,3-dehydro-2,3-deoxyribose 5'-phosphate)-DNA + a 5'-end 5'-phospho-2'-deoxyribonucleoside-DNA + H(+)</text>
        <dbReference type="Rhea" id="RHEA:66592"/>
        <dbReference type="Rhea" id="RHEA-COMP:13180"/>
        <dbReference type="Rhea" id="RHEA-COMP:16897"/>
        <dbReference type="Rhea" id="RHEA-COMP:17067"/>
        <dbReference type="ChEBI" id="CHEBI:15378"/>
        <dbReference type="ChEBI" id="CHEBI:136412"/>
        <dbReference type="ChEBI" id="CHEBI:157695"/>
        <dbReference type="ChEBI" id="CHEBI:167181"/>
        <dbReference type="EC" id="4.2.99.18"/>
    </reaction>
</comment>
<comment type="similarity">
    <text evidence="1">Belongs to the type-2 OGG1 family.</text>
</comment>
<proteinExistence type="inferred from homology"/>
<dbReference type="EC" id="3.2.2.-" evidence="1"/>
<dbReference type="EC" id="4.2.99.18" evidence="1"/>
<dbReference type="EMBL" id="CP000969">
    <property type="protein sequence ID" value="ACB09350.1"/>
    <property type="molecule type" value="Genomic_DNA"/>
</dbReference>
<dbReference type="RefSeq" id="WP_012310872.1">
    <property type="nucleotide sequence ID" value="NC_010483.1"/>
</dbReference>
<dbReference type="SMR" id="B1LAK2"/>
<dbReference type="KEGG" id="trq:TRQ2_1000"/>
<dbReference type="HOGENOM" id="CLU_104937_0_0_0"/>
<dbReference type="Proteomes" id="UP000001687">
    <property type="component" value="Chromosome"/>
</dbReference>
<dbReference type="GO" id="GO:0140078">
    <property type="term" value="F:class I DNA-(apurinic or apyrimidinic site) endonuclease activity"/>
    <property type="evidence" value="ECO:0007669"/>
    <property type="project" value="UniProtKB-EC"/>
</dbReference>
<dbReference type="GO" id="GO:0016799">
    <property type="term" value="F:hydrolase activity, hydrolyzing N-glycosyl compounds"/>
    <property type="evidence" value="ECO:0007669"/>
    <property type="project" value="UniProtKB-UniRule"/>
</dbReference>
<dbReference type="GO" id="GO:0006284">
    <property type="term" value="P:base-excision repair"/>
    <property type="evidence" value="ECO:0007669"/>
    <property type="project" value="UniProtKB-UniRule"/>
</dbReference>
<dbReference type="CDD" id="cd00056">
    <property type="entry name" value="ENDO3c"/>
    <property type="match status" value="1"/>
</dbReference>
<dbReference type="Gene3D" id="1.10.1670.10">
    <property type="entry name" value="Helix-hairpin-Helix base-excision DNA repair enzymes (C-terminal)"/>
    <property type="match status" value="1"/>
</dbReference>
<dbReference type="Gene3D" id="1.10.340.30">
    <property type="entry name" value="Hypothetical protein, domain 2"/>
    <property type="match status" value="1"/>
</dbReference>
<dbReference type="HAMAP" id="MF_00241">
    <property type="entry name" value="Ogg"/>
    <property type="match status" value="1"/>
</dbReference>
<dbReference type="InterPro" id="IPR012092">
    <property type="entry name" value="DNA_glyclase/AP_lyase_Ogg"/>
</dbReference>
<dbReference type="InterPro" id="IPR011257">
    <property type="entry name" value="DNA_glycosylase"/>
</dbReference>
<dbReference type="InterPro" id="IPR003265">
    <property type="entry name" value="HhH-GPD_domain"/>
</dbReference>
<dbReference type="InterPro" id="IPR023170">
    <property type="entry name" value="HhH_base_excis_C"/>
</dbReference>
<dbReference type="NCBIfam" id="NF002305">
    <property type="entry name" value="PRK01229.1"/>
    <property type="match status" value="1"/>
</dbReference>
<dbReference type="Pfam" id="PF22175">
    <property type="entry name" value="Ogg-HhH"/>
    <property type="match status" value="1"/>
</dbReference>
<dbReference type="PIRSF" id="PIRSF005954">
    <property type="entry name" value="Thrmst_ogg"/>
    <property type="match status" value="1"/>
</dbReference>
<dbReference type="SMART" id="SM00478">
    <property type="entry name" value="ENDO3c"/>
    <property type="match status" value="1"/>
</dbReference>
<dbReference type="SUPFAM" id="SSF48150">
    <property type="entry name" value="DNA-glycosylase"/>
    <property type="match status" value="1"/>
</dbReference>
<protein>
    <recommendedName>
        <fullName evidence="1">8-oxoguanine DNA glycosylase/AP lyase</fullName>
    </recommendedName>
    <domain>
        <recommendedName>
            <fullName evidence="1">8-oxoguanine DNA glycosylase</fullName>
            <shortName evidence="1">8-oxoG DNA glycosylase</shortName>
            <ecNumber evidence="1">3.2.2.-</ecNumber>
        </recommendedName>
    </domain>
    <domain>
        <recommendedName>
            <fullName evidence="1">DNA-(apurinic or apyrimidinic site) lyase</fullName>
            <shortName evidence="1">AP lyase</shortName>
            <ecNumber evidence="1">4.2.99.18</ecNumber>
        </recommendedName>
    </domain>
</protein>
<feature type="chain" id="PRO_1000100733" description="8-oxoguanine DNA glycosylase/AP lyase">
    <location>
        <begin position="1"/>
        <end position="207"/>
    </location>
</feature>
<feature type="active site" evidence="1">
    <location>
        <position position="129"/>
    </location>
</feature>
<feature type="active site" evidence="1">
    <location>
        <position position="147"/>
    </location>
</feature>
<feature type="site" description="Important for guanine/8-oxoguanine distinction" evidence="1">
    <location>
        <position position="207"/>
    </location>
</feature>